<accession>B7NDR8</accession>
<proteinExistence type="inferred from homology"/>
<feature type="chain" id="PRO_1000140729" description="Small ribosomal subunit protein uS4">
    <location>
        <begin position="1"/>
        <end position="206"/>
    </location>
</feature>
<feature type="domain" description="S4 RNA-binding" evidence="1">
    <location>
        <begin position="96"/>
        <end position="156"/>
    </location>
</feature>
<reference key="1">
    <citation type="journal article" date="2009" name="PLoS Genet.">
        <title>Organised genome dynamics in the Escherichia coli species results in highly diverse adaptive paths.</title>
        <authorList>
            <person name="Touchon M."/>
            <person name="Hoede C."/>
            <person name="Tenaillon O."/>
            <person name="Barbe V."/>
            <person name="Baeriswyl S."/>
            <person name="Bidet P."/>
            <person name="Bingen E."/>
            <person name="Bonacorsi S."/>
            <person name="Bouchier C."/>
            <person name="Bouvet O."/>
            <person name="Calteau A."/>
            <person name="Chiapello H."/>
            <person name="Clermont O."/>
            <person name="Cruveiller S."/>
            <person name="Danchin A."/>
            <person name="Diard M."/>
            <person name="Dossat C."/>
            <person name="Karoui M.E."/>
            <person name="Frapy E."/>
            <person name="Garry L."/>
            <person name="Ghigo J.M."/>
            <person name="Gilles A.M."/>
            <person name="Johnson J."/>
            <person name="Le Bouguenec C."/>
            <person name="Lescat M."/>
            <person name="Mangenot S."/>
            <person name="Martinez-Jehanne V."/>
            <person name="Matic I."/>
            <person name="Nassif X."/>
            <person name="Oztas S."/>
            <person name="Petit M.A."/>
            <person name="Pichon C."/>
            <person name="Rouy Z."/>
            <person name="Ruf C.S."/>
            <person name="Schneider D."/>
            <person name="Tourret J."/>
            <person name="Vacherie B."/>
            <person name="Vallenet D."/>
            <person name="Medigue C."/>
            <person name="Rocha E.P.C."/>
            <person name="Denamur E."/>
        </authorList>
    </citation>
    <scope>NUCLEOTIDE SEQUENCE [LARGE SCALE GENOMIC DNA]</scope>
    <source>
        <strain>UMN026 / ExPEC</strain>
    </source>
</reference>
<protein>
    <recommendedName>
        <fullName evidence="1">Small ribosomal subunit protein uS4</fullName>
    </recommendedName>
    <alternativeName>
        <fullName evidence="2">30S ribosomal protein S4</fullName>
    </alternativeName>
</protein>
<comment type="function">
    <text evidence="1">One of the primary rRNA binding proteins, it binds directly to 16S rRNA where it nucleates assembly of the body of the 30S subunit.</text>
</comment>
<comment type="function">
    <text evidence="1">With S5 and S12 plays an important role in translational accuracy.</text>
</comment>
<comment type="subunit">
    <text evidence="1">Part of the 30S ribosomal subunit. Contacts protein S5. The interaction surface between S4 and S5 is involved in control of translational fidelity.</text>
</comment>
<comment type="similarity">
    <text evidence="1">Belongs to the universal ribosomal protein uS4 family.</text>
</comment>
<keyword id="KW-0687">Ribonucleoprotein</keyword>
<keyword id="KW-0689">Ribosomal protein</keyword>
<keyword id="KW-0694">RNA-binding</keyword>
<keyword id="KW-0699">rRNA-binding</keyword>
<evidence type="ECO:0000255" key="1">
    <source>
        <dbReference type="HAMAP-Rule" id="MF_01306"/>
    </source>
</evidence>
<evidence type="ECO:0000305" key="2"/>
<dbReference type="EMBL" id="CU928163">
    <property type="protein sequence ID" value="CAR14918.1"/>
    <property type="molecule type" value="Genomic_DNA"/>
</dbReference>
<dbReference type="RefSeq" id="WP_000135224.1">
    <property type="nucleotide sequence ID" value="NC_011751.1"/>
</dbReference>
<dbReference type="RefSeq" id="YP_002414423.1">
    <property type="nucleotide sequence ID" value="NC_011751.1"/>
</dbReference>
<dbReference type="SMR" id="B7NDR8"/>
<dbReference type="STRING" id="585056.ECUMN_3770"/>
<dbReference type="GeneID" id="93778691"/>
<dbReference type="KEGG" id="eum:ECUMN_3770"/>
<dbReference type="PATRIC" id="fig|585056.7.peg.3944"/>
<dbReference type="HOGENOM" id="CLU_092403_0_2_6"/>
<dbReference type="Proteomes" id="UP000007097">
    <property type="component" value="Chromosome"/>
</dbReference>
<dbReference type="GO" id="GO:0015935">
    <property type="term" value="C:small ribosomal subunit"/>
    <property type="evidence" value="ECO:0007669"/>
    <property type="project" value="InterPro"/>
</dbReference>
<dbReference type="GO" id="GO:0019843">
    <property type="term" value="F:rRNA binding"/>
    <property type="evidence" value="ECO:0007669"/>
    <property type="project" value="UniProtKB-UniRule"/>
</dbReference>
<dbReference type="GO" id="GO:0003735">
    <property type="term" value="F:structural constituent of ribosome"/>
    <property type="evidence" value="ECO:0007669"/>
    <property type="project" value="InterPro"/>
</dbReference>
<dbReference type="GO" id="GO:0042274">
    <property type="term" value="P:ribosomal small subunit biogenesis"/>
    <property type="evidence" value="ECO:0007669"/>
    <property type="project" value="TreeGrafter"/>
</dbReference>
<dbReference type="GO" id="GO:0006412">
    <property type="term" value="P:translation"/>
    <property type="evidence" value="ECO:0007669"/>
    <property type="project" value="UniProtKB-UniRule"/>
</dbReference>
<dbReference type="CDD" id="cd00165">
    <property type="entry name" value="S4"/>
    <property type="match status" value="1"/>
</dbReference>
<dbReference type="FunFam" id="1.10.1050.10:FF:000001">
    <property type="entry name" value="30S ribosomal protein S4"/>
    <property type="match status" value="1"/>
</dbReference>
<dbReference type="FunFam" id="3.10.290.10:FF:000001">
    <property type="entry name" value="30S ribosomal protein S4"/>
    <property type="match status" value="1"/>
</dbReference>
<dbReference type="Gene3D" id="1.10.1050.10">
    <property type="entry name" value="Ribosomal Protein S4 Delta 41, Chain A, domain 1"/>
    <property type="match status" value="1"/>
</dbReference>
<dbReference type="Gene3D" id="3.10.290.10">
    <property type="entry name" value="RNA-binding S4 domain"/>
    <property type="match status" value="1"/>
</dbReference>
<dbReference type="HAMAP" id="MF_01306_B">
    <property type="entry name" value="Ribosomal_uS4_B"/>
    <property type="match status" value="1"/>
</dbReference>
<dbReference type="InterPro" id="IPR022801">
    <property type="entry name" value="Ribosomal_uS4"/>
</dbReference>
<dbReference type="InterPro" id="IPR005709">
    <property type="entry name" value="Ribosomal_uS4_bac-type"/>
</dbReference>
<dbReference type="InterPro" id="IPR018079">
    <property type="entry name" value="Ribosomal_uS4_CS"/>
</dbReference>
<dbReference type="InterPro" id="IPR001912">
    <property type="entry name" value="Ribosomal_uS4_N"/>
</dbReference>
<dbReference type="InterPro" id="IPR002942">
    <property type="entry name" value="S4_RNA-bd"/>
</dbReference>
<dbReference type="InterPro" id="IPR036986">
    <property type="entry name" value="S4_RNA-bd_sf"/>
</dbReference>
<dbReference type="NCBIfam" id="NF003717">
    <property type="entry name" value="PRK05327.1"/>
    <property type="match status" value="1"/>
</dbReference>
<dbReference type="NCBIfam" id="TIGR01017">
    <property type="entry name" value="rpsD_bact"/>
    <property type="match status" value="1"/>
</dbReference>
<dbReference type="PANTHER" id="PTHR11831">
    <property type="entry name" value="30S 40S RIBOSOMAL PROTEIN"/>
    <property type="match status" value="1"/>
</dbReference>
<dbReference type="PANTHER" id="PTHR11831:SF4">
    <property type="entry name" value="SMALL RIBOSOMAL SUBUNIT PROTEIN US4M"/>
    <property type="match status" value="1"/>
</dbReference>
<dbReference type="Pfam" id="PF00163">
    <property type="entry name" value="Ribosomal_S4"/>
    <property type="match status" value="1"/>
</dbReference>
<dbReference type="Pfam" id="PF01479">
    <property type="entry name" value="S4"/>
    <property type="match status" value="1"/>
</dbReference>
<dbReference type="SMART" id="SM01390">
    <property type="entry name" value="Ribosomal_S4"/>
    <property type="match status" value="1"/>
</dbReference>
<dbReference type="SMART" id="SM00363">
    <property type="entry name" value="S4"/>
    <property type="match status" value="1"/>
</dbReference>
<dbReference type="SUPFAM" id="SSF55174">
    <property type="entry name" value="Alpha-L RNA-binding motif"/>
    <property type="match status" value="1"/>
</dbReference>
<dbReference type="PROSITE" id="PS00632">
    <property type="entry name" value="RIBOSOMAL_S4"/>
    <property type="match status" value="1"/>
</dbReference>
<dbReference type="PROSITE" id="PS50889">
    <property type="entry name" value="S4"/>
    <property type="match status" value="1"/>
</dbReference>
<sequence length="206" mass="23469">MARYLGPKLKLSRREGTDLFLKSGVRAIDTKCKIEQAPGQHGARKPRLSDYGVQLREKQKVRRIYGVLERQFRNYYKEAARLKGNTGENLLALLEGRLDNVVYRMGFGATRAEARQLVSHKAIMVNGRVVNIASYQVSPNDVVSIREKAKKQSRVKAALELAEQREKPTWLEVDAGKMEGTFKRKPERSDLSADINEHLIVELYSK</sequence>
<gene>
    <name evidence="1" type="primary">rpsD</name>
    <name type="ordered locus">ECUMN_3770</name>
</gene>
<name>RS4_ECOLU</name>
<organism>
    <name type="scientific">Escherichia coli O17:K52:H18 (strain UMN026 / ExPEC)</name>
    <dbReference type="NCBI Taxonomy" id="585056"/>
    <lineage>
        <taxon>Bacteria</taxon>
        <taxon>Pseudomonadati</taxon>
        <taxon>Pseudomonadota</taxon>
        <taxon>Gammaproteobacteria</taxon>
        <taxon>Enterobacterales</taxon>
        <taxon>Enterobacteriaceae</taxon>
        <taxon>Escherichia</taxon>
    </lineage>
</organism>